<comment type="function">
    <text evidence="1">Putative TATA-binding protein.</text>
</comment>
<comment type="induction">
    <text evidence="2">Expressed in the early phase of the viral replicative cycle.</text>
</comment>
<comment type="domain">
    <text evidence="1">Possibly contains a TATA-binding domain.</text>
</comment>
<comment type="similarity">
    <text evidence="5">Belongs to the asfivirus B263R family.</text>
</comment>
<sequence>MEDETELCFRSNKVTRLEMFVCTYGGKITSLACSHMELIKMLQIAEPVKALNCNFGHQCLPGYESLIKTPKKTKNMLRRPRKTEGDGTCFNSAIEASILFKDKMYKLKCFPSTGEIQVPGVIFPDFEDGKNIIQQWVDFLQHQPIEKKIQIIEFKTIMINFKFQINPVSPRVIIHLKKFAALLEHIPTPYPIREIKPPLEDSKVSAKFMVSPGKKVRINVFLKGKINILGCNTKESAEIIYTFLKDLISVHWQEILCVLPVPD</sequence>
<keyword id="KW-0244">Early protein</keyword>
<keyword id="KW-1185">Reference proteome</keyword>
<organismHost>
    <name type="scientific">Ornithodoros</name>
    <name type="common">relapsing fever ticks</name>
    <dbReference type="NCBI Taxonomy" id="6937"/>
</organismHost>
<organismHost>
    <name type="scientific">Sus scrofa</name>
    <name type="common">Pig</name>
    <dbReference type="NCBI Taxonomy" id="9823"/>
</organismHost>
<dbReference type="EMBL" id="U18466">
    <property type="protein sequence ID" value="AAA65316.1"/>
    <property type="molecule type" value="Genomic_DNA"/>
</dbReference>
<dbReference type="RefSeq" id="NP_042780.1">
    <property type="nucleotide sequence ID" value="NC_001659.2"/>
</dbReference>
<dbReference type="GeneID" id="22220316"/>
<dbReference type="KEGG" id="vg:22220316"/>
<dbReference type="Proteomes" id="UP000000624">
    <property type="component" value="Segment"/>
</dbReference>
<accession>Q65175</accession>
<name>TBP_ASFB7</name>
<gene>
    <name type="ordered locus">Ba71V-086</name>
    <name type="ORF">B263R</name>
</gene>
<proteinExistence type="evidence at transcript level"/>
<evidence type="ECO:0000269" key="1">
    <source>
    </source>
</evidence>
<evidence type="ECO:0000269" key="2">
    <source>
    </source>
</evidence>
<evidence type="ECO:0000303" key="3">
    <source>
    </source>
</evidence>
<evidence type="ECO:0000303" key="4">
    <source>
    </source>
</evidence>
<evidence type="ECO:0000305" key="5"/>
<protein>
    <recommendedName>
        <fullName evidence="3">Putative TATA-binding protein pB263R</fullName>
        <shortName evidence="4">TBP</shortName>
    </recommendedName>
</protein>
<feature type="chain" id="PRO_0000373619" description="Putative TATA-binding protein pB263R">
    <location>
        <begin position="1"/>
        <end position="263"/>
    </location>
</feature>
<organism>
    <name type="scientific">African swine fever virus (strain Badajoz 1971 Vero-adapted)</name>
    <name type="common">Ba71V</name>
    <name type="synonym">ASFV</name>
    <dbReference type="NCBI Taxonomy" id="10498"/>
    <lineage>
        <taxon>Viruses</taxon>
        <taxon>Varidnaviria</taxon>
        <taxon>Bamfordvirae</taxon>
        <taxon>Nucleocytoviricota</taxon>
        <taxon>Pokkesviricetes</taxon>
        <taxon>Asfuvirales</taxon>
        <taxon>Asfarviridae</taxon>
        <taxon>Asfivirus</taxon>
        <taxon>African swine fever virus</taxon>
    </lineage>
</organism>
<reference key="1">
    <citation type="journal article" date="1995" name="Virology">
        <title>Analysis of the complete nucleotide sequence of African swine fever virus.</title>
        <authorList>
            <person name="Yanez R.J."/>
            <person name="Rodriguez J.M."/>
            <person name="Nogal M.L."/>
            <person name="Yuste L."/>
            <person name="Enriquez C."/>
            <person name="Rodriguez J.F."/>
            <person name="Vinuela E."/>
        </authorList>
    </citation>
    <scope>NUCLEOTIDE SEQUENCE [LARGE SCALE GENOMIC DNA]</scope>
</reference>
<reference key="2">
    <citation type="journal article" date="2018" name="PeerJ">
        <title>In silico structural and functional prediction of African swine fever virus protein-B263R reveals features of a TATA-binding protein.</title>
        <authorList>
            <person name="Kinyanyi D."/>
            <person name="Obiero G."/>
            <person name="Obiero G.F.O."/>
            <person name="Amwayi P."/>
            <person name="Mwaniki S."/>
            <person name="Wamalwa M."/>
        </authorList>
    </citation>
    <scope>DOMAIN</scope>
    <scope>FUNCTION</scope>
</reference>
<reference key="3">
    <citation type="journal article" date="2020" name="Biochem. Soc. Trans.">
        <title>Transcriptome view of a killer: African swine fever virus.</title>
        <authorList>
            <person name="Cackett G."/>
            <person name="Sykora M."/>
            <person name="Werner F."/>
        </authorList>
    </citation>
    <scope>REVIEW</scope>
</reference>
<reference key="4">
    <citation type="journal article" date="2020" name="J. Virol.">
        <title>The African Swine Fever Virus Transcriptome.</title>
        <authorList>
            <person name="Cackett G."/>
            <person name="Matelska D."/>
            <person name="Sykora M."/>
            <person name="Portugal R."/>
            <person name="Malecki M."/>
            <person name="Baehler J."/>
            <person name="Dixon L."/>
            <person name="Werner F."/>
        </authorList>
    </citation>
    <scope>INDUCTION</scope>
</reference>